<comment type="function">
    <text evidence="2 5">Acts as an osmosensitive cation channel preferentially activated upon hypotonic stress (By similarity). In contrast to TMEM63B, does not show phospholipid scramblase activity (By similarity). Enriched in mitochondria-ER contact sites where it may regulate the metabolite flux and organelles' morphologies in response to osmotic changes (By similarity). In particular may regulate mitochondrial motility and function in motor neuron axons (By similarity). Required for the functional integrity of the kidney glomerular filtration barrier (PubMed:30900988).</text>
</comment>
<comment type="catalytic activity">
    <reaction evidence="1">
        <text>Ca(2+)(in) = Ca(2+)(out)</text>
        <dbReference type="Rhea" id="RHEA:29671"/>
        <dbReference type="ChEBI" id="CHEBI:29108"/>
    </reaction>
</comment>
<comment type="subunit">
    <text evidence="2">Monomer.</text>
</comment>
<comment type="subcellular location">
    <subcellularLocation>
        <location evidence="2">Endoplasmic reticulum membrane</location>
        <topology evidence="3">Multi-pass membrane protein</topology>
    </subcellularLocation>
    <subcellularLocation>
        <location evidence="1">Cell membrane</location>
        <topology evidence="3">Multi-pass membrane protein</topology>
    </subcellularLocation>
    <text evidence="2">Localizes at mitochondria-ER contact sites.</text>
</comment>
<comment type="tissue specificity">
    <text evidence="5">Expressed in podocytes of kidney glomeruli.</text>
</comment>
<comment type="similarity">
    <text evidence="6">Belongs to the CSC1 (TC 1.A.17) family.</text>
</comment>
<reference key="1">
    <citation type="journal article" date="2004" name="Nature">
        <title>Genome sequence of the Brown Norway rat yields insights into mammalian evolution.</title>
        <authorList>
            <person name="Gibbs R.A."/>
            <person name="Weinstock G.M."/>
            <person name="Metzker M.L."/>
            <person name="Muzny D.M."/>
            <person name="Sodergren E.J."/>
            <person name="Scherer S."/>
            <person name="Scott G."/>
            <person name="Steffen D."/>
            <person name="Worley K.C."/>
            <person name="Burch P.E."/>
            <person name="Okwuonu G."/>
            <person name="Hines S."/>
            <person name="Lewis L."/>
            <person name="Deramo C."/>
            <person name="Delgado O."/>
            <person name="Dugan-Rocha S."/>
            <person name="Miner G."/>
            <person name="Morgan M."/>
            <person name="Hawes A."/>
            <person name="Gill R."/>
            <person name="Holt R.A."/>
            <person name="Adams M.D."/>
            <person name="Amanatides P.G."/>
            <person name="Baden-Tillson H."/>
            <person name="Barnstead M."/>
            <person name="Chin S."/>
            <person name="Evans C.A."/>
            <person name="Ferriera S."/>
            <person name="Fosler C."/>
            <person name="Glodek A."/>
            <person name="Gu Z."/>
            <person name="Jennings D."/>
            <person name="Kraft C.L."/>
            <person name="Nguyen T."/>
            <person name="Pfannkoch C.M."/>
            <person name="Sitter C."/>
            <person name="Sutton G.G."/>
            <person name="Venter J.C."/>
            <person name="Woodage T."/>
            <person name="Smith D."/>
            <person name="Lee H.-M."/>
            <person name="Gustafson E."/>
            <person name="Cahill P."/>
            <person name="Kana A."/>
            <person name="Doucette-Stamm L."/>
            <person name="Weinstock K."/>
            <person name="Fechtel K."/>
            <person name="Weiss R.B."/>
            <person name="Dunn D.M."/>
            <person name="Green E.D."/>
            <person name="Blakesley R.W."/>
            <person name="Bouffard G.G."/>
            <person name="De Jong P.J."/>
            <person name="Osoegawa K."/>
            <person name="Zhu B."/>
            <person name="Marra M."/>
            <person name="Schein J."/>
            <person name="Bosdet I."/>
            <person name="Fjell C."/>
            <person name="Jones S."/>
            <person name="Krzywinski M."/>
            <person name="Mathewson C."/>
            <person name="Siddiqui A."/>
            <person name="Wye N."/>
            <person name="McPherson J."/>
            <person name="Zhao S."/>
            <person name="Fraser C.M."/>
            <person name="Shetty J."/>
            <person name="Shatsman S."/>
            <person name="Geer K."/>
            <person name="Chen Y."/>
            <person name="Abramzon S."/>
            <person name="Nierman W.C."/>
            <person name="Havlak P.H."/>
            <person name="Chen R."/>
            <person name="Durbin K.J."/>
            <person name="Egan A."/>
            <person name="Ren Y."/>
            <person name="Song X.-Z."/>
            <person name="Li B."/>
            <person name="Liu Y."/>
            <person name="Qin X."/>
            <person name="Cawley S."/>
            <person name="Cooney A.J."/>
            <person name="D'Souza L.M."/>
            <person name="Martin K."/>
            <person name="Wu J.Q."/>
            <person name="Gonzalez-Garay M.L."/>
            <person name="Jackson A.R."/>
            <person name="Kalafus K.J."/>
            <person name="McLeod M.P."/>
            <person name="Milosavljevic A."/>
            <person name="Virk D."/>
            <person name="Volkov A."/>
            <person name="Wheeler D.A."/>
            <person name="Zhang Z."/>
            <person name="Bailey J.A."/>
            <person name="Eichler E.E."/>
            <person name="Tuzun E."/>
            <person name="Birney E."/>
            <person name="Mongin E."/>
            <person name="Ureta-Vidal A."/>
            <person name="Woodwark C."/>
            <person name="Zdobnov E."/>
            <person name="Bork P."/>
            <person name="Suyama M."/>
            <person name="Torrents D."/>
            <person name="Alexandersson M."/>
            <person name="Trask B.J."/>
            <person name="Young J.M."/>
            <person name="Huang H."/>
            <person name="Wang H."/>
            <person name="Xing H."/>
            <person name="Daniels S."/>
            <person name="Gietzen D."/>
            <person name="Schmidt J."/>
            <person name="Stevens K."/>
            <person name="Vitt U."/>
            <person name="Wingrove J."/>
            <person name="Camara F."/>
            <person name="Mar Alba M."/>
            <person name="Abril J.F."/>
            <person name="Guigo R."/>
            <person name="Smit A."/>
            <person name="Dubchak I."/>
            <person name="Rubin E.M."/>
            <person name="Couronne O."/>
            <person name="Poliakov A."/>
            <person name="Huebner N."/>
            <person name="Ganten D."/>
            <person name="Goesele C."/>
            <person name="Hummel O."/>
            <person name="Kreitler T."/>
            <person name="Lee Y.-A."/>
            <person name="Monti J."/>
            <person name="Schulz H."/>
            <person name="Zimdahl H."/>
            <person name="Himmelbauer H."/>
            <person name="Lehrach H."/>
            <person name="Jacob H.J."/>
            <person name="Bromberg S."/>
            <person name="Gullings-Handley J."/>
            <person name="Jensen-Seaman M.I."/>
            <person name="Kwitek A.E."/>
            <person name="Lazar J."/>
            <person name="Pasko D."/>
            <person name="Tonellato P.J."/>
            <person name="Twigger S."/>
            <person name="Ponting C.P."/>
            <person name="Duarte J.M."/>
            <person name="Rice S."/>
            <person name="Goodstadt L."/>
            <person name="Beatson S.A."/>
            <person name="Emes R.D."/>
            <person name="Winter E.E."/>
            <person name="Webber C."/>
            <person name="Brandt P."/>
            <person name="Nyakatura G."/>
            <person name="Adetobi M."/>
            <person name="Chiaromonte F."/>
            <person name="Elnitski L."/>
            <person name="Eswara P."/>
            <person name="Hardison R.C."/>
            <person name="Hou M."/>
            <person name="Kolbe D."/>
            <person name="Makova K."/>
            <person name="Miller W."/>
            <person name="Nekrutenko A."/>
            <person name="Riemer C."/>
            <person name="Schwartz S."/>
            <person name="Taylor J."/>
            <person name="Yang S."/>
            <person name="Zhang Y."/>
            <person name="Lindpaintner K."/>
            <person name="Andrews T.D."/>
            <person name="Caccamo M."/>
            <person name="Clamp M."/>
            <person name="Clarke L."/>
            <person name="Curwen V."/>
            <person name="Durbin R.M."/>
            <person name="Eyras E."/>
            <person name="Searle S.M."/>
            <person name="Cooper G.M."/>
            <person name="Batzoglou S."/>
            <person name="Brudno M."/>
            <person name="Sidow A."/>
            <person name="Stone E.A."/>
            <person name="Payseur B.A."/>
            <person name="Bourque G."/>
            <person name="Lopez-Otin C."/>
            <person name="Puente X.S."/>
            <person name="Chakrabarti K."/>
            <person name="Chatterji S."/>
            <person name="Dewey C."/>
            <person name="Pachter L."/>
            <person name="Bray N."/>
            <person name="Yap V.B."/>
            <person name="Caspi A."/>
            <person name="Tesler G."/>
            <person name="Pevzner P.A."/>
            <person name="Haussler D."/>
            <person name="Roskin K.M."/>
            <person name="Baertsch R."/>
            <person name="Clawson H."/>
            <person name="Furey T.S."/>
            <person name="Hinrichs A.S."/>
            <person name="Karolchik D."/>
            <person name="Kent W.J."/>
            <person name="Rosenbloom K.R."/>
            <person name="Trumbower H."/>
            <person name="Weirauch M."/>
            <person name="Cooper D.N."/>
            <person name="Stenson P.D."/>
            <person name="Ma B."/>
            <person name="Brent M."/>
            <person name="Arumugam M."/>
            <person name="Shteynberg D."/>
            <person name="Copley R.R."/>
            <person name="Taylor M.S."/>
            <person name="Riethman H."/>
            <person name="Mudunuri U."/>
            <person name="Peterson J."/>
            <person name="Guyer M."/>
            <person name="Felsenfeld A."/>
            <person name="Old S."/>
            <person name="Mockrin S."/>
            <person name="Collins F.S."/>
        </authorList>
    </citation>
    <scope>NUCLEOTIDE SEQUENCE [LARGE SCALE GENOMIC DNA]</scope>
    <source>
        <strain>Brown Norway</strain>
    </source>
</reference>
<reference key="2">
    <citation type="submission" date="2005-07" db="EMBL/GenBank/DDBJ databases">
        <authorList>
            <person name="Mural R.J."/>
            <person name="Adams M.D."/>
            <person name="Myers E.W."/>
            <person name="Smith H.O."/>
            <person name="Venter J.C."/>
        </authorList>
    </citation>
    <scope>NUCLEOTIDE SEQUENCE [LARGE SCALE GENOMIC DNA]</scope>
    <source>
        <strain>Brown Norway</strain>
    </source>
</reference>
<reference key="3">
    <citation type="journal article" date="2012" name="Nat. Commun.">
        <title>Quantitative maps of protein phosphorylation sites across 14 different rat organs and tissues.</title>
        <authorList>
            <person name="Lundby A."/>
            <person name="Secher A."/>
            <person name="Lage K."/>
            <person name="Nordsborg N.B."/>
            <person name="Dmytriyev A."/>
            <person name="Lundby C."/>
            <person name="Olsen J.V."/>
        </authorList>
    </citation>
    <scope>IDENTIFICATION BY MASS SPECTROMETRY [LARGE SCALE ANALYSIS]</scope>
</reference>
<reference key="4">
    <citation type="journal article" date="2019" name="Elife">
        <title>Analysis of the genomic architecture of a complex trait locus in hypertensive rat models links Tmem63c to kidney damage.</title>
        <authorList>
            <person name="Schulz A."/>
            <person name="Mueller N.V."/>
            <person name="van de Lest N.A."/>
            <person name="Eisenreich A."/>
            <person name="Schmidbauer M."/>
            <person name="Barysenka A."/>
            <person name="Purfuerst B."/>
            <person name="Sporbert A."/>
            <person name="Lorenzen T."/>
            <person name="Meyer A.M."/>
            <person name="Herlan L."/>
            <person name="Witten A."/>
            <person name="Ruehle F."/>
            <person name="Zhou W."/>
            <person name="de Heer E."/>
            <person name="Scharpfenecker M."/>
            <person name="Panakova D."/>
            <person name="Stoll M."/>
            <person name="Kreutz R."/>
        </authorList>
    </citation>
    <scope>FUNCTION</scope>
    <scope>TISSUE SPECIFICITY</scope>
</reference>
<name>TM63C_RAT</name>
<proteinExistence type="evidence at protein level"/>
<dbReference type="EMBL" id="AABR07065129">
    <property type="status" value="NOT_ANNOTATED_CDS"/>
    <property type="molecule type" value="Genomic_DNA"/>
</dbReference>
<dbReference type="EMBL" id="AABR07065130">
    <property type="status" value="NOT_ANNOTATED_CDS"/>
    <property type="molecule type" value="Genomic_DNA"/>
</dbReference>
<dbReference type="EMBL" id="CH473982">
    <property type="protein sequence ID" value="EDL81621.1"/>
    <property type="molecule type" value="Genomic_DNA"/>
</dbReference>
<dbReference type="EMBL" id="CH473982">
    <property type="protein sequence ID" value="EDL81622.1"/>
    <property type="molecule type" value="Genomic_DNA"/>
</dbReference>
<dbReference type="RefSeq" id="NP_001101515.1">
    <property type="nucleotide sequence ID" value="NM_001108045.1"/>
</dbReference>
<dbReference type="RefSeq" id="XP_006240444.1">
    <property type="nucleotide sequence ID" value="XM_006240382.5"/>
</dbReference>
<dbReference type="RefSeq" id="XP_006240445.1">
    <property type="nucleotide sequence ID" value="XM_006240383.5"/>
</dbReference>
<dbReference type="RefSeq" id="XP_006240446.1">
    <property type="nucleotide sequence ID" value="XM_006240384.4"/>
</dbReference>
<dbReference type="RefSeq" id="XP_006240447.1">
    <property type="nucleotide sequence ID" value="XM_006240385.5"/>
</dbReference>
<dbReference type="RefSeq" id="XP_006240448.1">
    <property type="nucleotide sequence ID" value="XM_006240386.5"/>
</dbReference>
<dbReference type="RefSeq" id="XP_006240449.1">
    <property type="nucleotide sequence ID" value="XM_006240387.5"/>
</dbReference>
<dbReference type="RefSeq" id="XP_006240451.1">
    <property type="nucleotide sequence ID" value="XM_006240389.5"/>
</dbReference>
<dbReference type="RefSeq" id="XP_017449647.1">
    <property type="nucleotide sequence ID" value="XM_017594158.3"/>
</dbReference>
<dbReference type="RefSeq" id="XP_017449648.1">
    <property type="nucleotide sequence ID" value="XM_017594159.3"/>
</dbReference>
<dbReference type="RefSeq" id="XP_017449649.1">
    <property type="nucleotide sequence ID" value="XM_017594160.1"/>
</dbReference>
<dbReference type="RefSeq" id="XP_017449650.1">
    <property type="nucleotide sequence ID" value="XM_017594161.3"/>
</dbReference>
<dbReference type="RefSeq" id="XP_038968254.1">
    <property type="nucleotide sequence ID" value="XM_039112326.2"/>
</dbReference>
<dbReference type="RefSeq" id="XP_038968255.1">
    <property type="nucleotide sequence ID" value="XM_039112327.2"/>
</dbReference>
<dbReference type="RefSeq" id="XP_063118018.1">
    <property type="nucleotide sequence ID" value="XM_063261948.1"/>
</dbReference>
<dbReference type="RefSeq" id="XP_063118020.1">
    <property type="nucleotide sequence ID" value="XM_063261950.1"/>
</dbReference>
<dbReference type="RefSeq" id="XP_063118021.1">
    <property type="nucleotide sequence ID" value="XM_063261951.1"/>
</dbReference>
<dbReference type="SMR" id="D3ZNF5"/>
<dbReference type="FunCoup" id="D3ZNF5">
    <property type="interactions" value="599"/>
</dbReference>
<dbReference type="STRING" id="10116.ENSRNOP00000068547"/>
<dbReference type="PhosphoSitePlus" id="D3ZNF5"/>
<dbReference type="PaxDb" id="10116-ENSRNOP00000015571"/>
<dbReference type="Ensembl" id="ENSRNOT00000015571.7">
    <property type="protein sequence ID" value="ENSRNOP00000015571.5"/>
    <property type="gene ID" value="ENSRNOG00000011334.7"/>
</dbReference>
<dbReference type="GeneID" id="314332"/>
<dbReference type="KEGG" id="rno:314332"/>
<dbReference type="UCSC" id="RGD:1310207">
    <property type="organism name" value="rat"/>
</dbReference>
<dbReference type="AGR" id="RGD:1310207"/>
<dbReference type="CTD" id="57156"/>
<dbReference type="RGD" id="1310207">
    <property type="gene designation" value="Tmem63c"/>
</dbReference>
<dbReference type="eggNOG" id="KOG1134">
    <property type="taxonomic scope" value="Eukaryota"/>
</dbReference>
<dbReference type="GeneTree" id="ENSGT00940000159072"/>
<dbReference type="HOGENOM" id="CLU_015647_0_0_1"/>
<dbReference type="InParanoid" id="D3ZNF5"/>
<dbReference type="OMA" id="VVCAWAF"/>
<dbReference type="OrthoDB" id="1689567at2759"/>
<dbReference type="PhylomeDB" id="D3ZNF5"/>
<dbReference type="TreeFam" id="TF324300"/>
<dbReference type="PRO" id="PR:D3ZNF5"/>
<dbReference type="Proteomes" id="UP000002494">
    <property type="component" value="Chromosome 6"/>
</dbReference>
<dbReference type="Proteomes" id="UP000234681">
    <property type="component" value="Chromosome 6"/>
</dbReference>
<dbReference type="Bgee" id="ENSRNOG00000011334">
    <property type="expression patterns" value="Expressed in cerebellum and 16 other cell types or tissues"/>
</dbReference>
<dbReference type="GO" id="GO:0005789">
    <property type="term" value="C:endoplasmic reticulum membrane"/>
    <property type="evidence" value="ECO:0007669"/>
    <property type="project" value="UniProtKB-SubCell"/>
</dbReference>
<dbReference type="GO" id="GO:0005886">
    <property type="term" value="C:plasma membrane"/>
    <property type="evidence" value="ECO:0000250"/>
    <property type="project" value="UniProtKB"/>
</dbReference>
<dbReference type="GO" id="GO:0005227">
    <property type="term" value="F:calcium-activated cation channel activity"/>
    <property type="evidence" value="ECO:0000266"/>
    <property type="project" value="RGD"/>
</dbReference>
<dbReference type="GO" id="GO:1990760">
    <property type="term" value="F:osmolarity-sensing monoatomic cation channel activity"/>
    <property type="evidence" value="ECO:0000250"/>
    <property type="project" value="UniProtKB"/>
</dbReference>
<dbReference type="GO" id="GO:0003094">
    <property type="term" value="P:glomerular filtration"/>
    <property type="evidence" value="ECO:0000315"/>
    <property type="project" value="UniProtKB"/>
</dbReference>
<dbReference type="GO" id="GO:0006812">
    <property type="term" value="P:monoatomic cation transport"/>
    <property type="evidence" value="ECO:0000266"/>
    <property type="project" value="RGD"/>
</dbReference>
<dbReference type="InterPro" id="IPR045122">
    <property type="entry name" value="Csc1-like"/>
</dbReference>
<dbReference type="InterPro" id="IPR003864">
    <property type="entry name" value="CSC1/OSCA1-like_7TM"/>
</dbReference>
<dbReference type="InterPro" id="IPR027815">
    <property type="entry name" value="CSC1/OSCA1-like_cyt"/>
</dbReference>
<dbReference type="InterPro" id="IPR032880">
    <property type="entry name" value="Csc1/OSCA1-like_N"/>
</dbReference>
<dbReference type="PANTHER" id="PTHR13018:SF21">
    <property type="entry name" value="CALCIUM PERMEABLE STRESS-GATED CATION CHANNEL 1"/>
    <property type="match status" value="1"/>
</dbReference>
<dbReference type="PANTHER" id="PTHR13018">
    <property type="entry name" value="PROBABLE MEMBRANE PROTEIN DUF221-RELATED"/>
    <property type="match status" value="1"/>
</dbReference>
<dbReference type="Pfam" id="PF14703">
    <property type="entry name" value="PHM7_cyt"/>
    <property type="match status" value="1"/>
</dbReference>
<dbReference type="Pfam" id="PF02714">
    <property type="entry name" value="RSN1_7TM"/>
    <property type="match status" value="1"/>
</dbReference>
<dbReference type="Pfam" id="PF13967">
    <property type="entry name" value="RSN1_TM"/>
    <property type="match status" value="1"/>
</dbReference>
<organism>
    <name type="scientific">Rattus norvegicus</name>
    <name type="common">Rat</name>
    <dbReference type="NCBI Taxonomy" id="10116"/>
    <lineage>
        <taxon>Eukaryota</taxon>
        <taxon>Metazoa</taxon>
        <taxon>Chordata</taxon>
        <taxon>Craniata</taxon>
        <taxon>Vertebrata</taxon>
        <taxon>Euteleostomi</taxon>
        <taxon>Mammalia</taxon>
        <taxon>Eutheria</taxon>
        <taxon>Euarchontoglires</taxon>
        <taxon>Glires</taxon>
        <taxon>Rodentia</taxon>
        <taxon>Myomorpha</taxon>
        <taxon>Muroidea</taxon>
        <taxon>Muridae</taxon>
        <taxon>Murinae</taxon>
        <taxon>Rattus</taxon>
    </lineage>
</organism>
<gene>
    <name type="primary">Tmem63c</name>
    <name type="synonym">Csc1</name>
</gene>
<feature type="chain" id="PRO_0000448961" description="Osmosensitive cation channel TMEM63C">
    <location>
        <begin position="1"/>
        <end position="802"/>
    </location>
</feature>
<feature type="topological domain" description="Extracellular" evidence="1">
    <location>
        <begin position="1"/>
        <end position="35"/>
    </location>
</feature>
<feature type="transmembrane region" description="Helical; Name=TM0" evidence="1">
    <location>
        <begin position="36"/>
        <end position="60"/>
    </location>
</feature>
<feature type="topological domain" description="Cytoplasmic" evidence="1">
    <location>
        <begin position="61"/>
        <end position="124"/>
    </location>
</feature>
<feature type="transmembrane region" description="Helical; Name=TM1" evidence="1">
    <location>
        <begin position="125"/>
        <end position="157"/>
    </location>
</feature>
<feature type="topological domain" description="Extracellular" evidence="1">
    <location>
        <begin position="158"/>
        <end position="180"/>
    </location>
</feature>
<feature type="transmembrane region" description="Helical; Name=TM2" evidence="1">
    <location>
        <begin position="181"/>
        <end position="205"/>
    </location>
</feature>
<feature type="topological domain" description="Cytoplasmic" evidence="1">
    <location>
        <begin position="206"/>
        <end position="401"/>
    </location>
</feature>
<feature type="transmembrane region" description="Helical; Name=TM3" evidence="1">
    <location>
        <begin position="402"/>
        <end position="431"/>
    </location>
</feature>
<feature type="topological domain" description="Extracellular" evidence="1">
    <location>
        <begin position="432"/>
        <end position="446"/>
    </location>
</feature>
<feature type="transmembrane region" description="Helical; Name=TM4" evidence="1">
    <location>
        <begin position="447"/>
        <end position="476"/>
    </location>
</feature>
<feature type="topological domain" description="Cytoplasmic" evidence="1">
    <location>
        <begin position="477"/>
        <end position="480"/>
    </location>
</feature>
<feature type="transmembrane region" description="Helical; Name=TM5" evidence="1">
    <location>
        <begin position="481"/>
        <end position="517"/>
    </location>
</feature>
<feature type="topological domain" description="Extracellular" evidence="1">
    <location>
        <begin position="518"/>
        <end position="540"/>
    </location>
</feature>
<feature type="transmembrane region" description="Helical; Name=TM6" evidence="1">
    <location>
        <begin position="541"/>
        <end position="573"/>
    </location>
</feature>
<feature type="topological domain" description="Cytoplasmic" evidence="1">
    <location>
        <begin position="574"/>
        <end position="593"/>
    </location>
</feature>
<feature type="transmembrane region" description="Helical; Name=TM7" evidence="1">
    <location>
        <begin position="594"/>
        <end position="612"/>
    </location>
</feature>
<feature type="topological domain" description="Extracellular" evidence="1">
    <location>
        <begin position="613"/>
        <end position="615"/>
    </location>
</feature>
<feature type="transmembrane region" description="Helical; Name=TM8" evidence="1">
    <location>
        <begin position="616"/>
        <end position="640"/>
    </location>
</feature>
<feature type="topological domain" description="Cytoplasmic" evidence="1">
    <location>
        <begin position="641"/>
        <end position="647"/>
    </location>
</feature>
<feature type="transmembrane region" description="Helical; Name=TM9" evidence="1">
    <location>
        <begin position="648"/>
        <end position="676"/>
    </location>
</feature>
<feature type="topological domain" description="Extracellular" evidence="1">
    <location>
        <begin position="677"/>
        <end position="681"/>
    </location>
</feature>
<feature type="transmembrane region" description="Helical; Name=TM10" evidence="1">
    <location>
        <begin position="682"/>
        <end position="702"/>
    </location>
</feature>
<feature type="topological domain" description="Cytoplasmic" evidence="1">
    <location>
        <begin position="703"/>
        <end position="802"/>
    </location>
</feature>
<feature type="region of interest" description="Disordered" evidence="4">
    <location>
        <begin position="753"/>
        <end position="785"/>
    </location>
</feature>
<feature type="modified residue" description="Phosphoserine" evidence="1">
    <location>
        <position position="75"/>
    </location>
</feature>
<feature type="modified residue" description="Phosphoserine" evidence="1">
    <location>
        <position position="78"/>
    </location>
</feature>
<keyword id="KW-0106">Calcium</keyword>
<keyword id="KW-1003">Cell membrane</keyword>
<keyword id="KW-0256">Endoplasmic reticulum</keyword>
<keyword id="KW-0407">Ion channel</keyword>
<keyword id="KW-0406">Ion transport</keyword>
<keyword id="KW-0472">Membrane</keyword>
<keyword id="KW-0597">Phosphoprotein</keyword>
<keyword id="KW-1185">Reference proteome</keyword>
<keyword id="KW-0812">Transmembrane</keyword>
<keyword id="KW-1133">Transmembrane helix</keyword>
<keyword id="KW-0813">Transport</keyword>
<protein>
    <recommendedName>
        <fullName evidence="6">Osmosensitive cation channel TMEM63C</fullName>
    </recommendedName>
    <alternativeName>
        <fullName>Calcium permeable stress-gated cation channel 1</fullName>
    </alternativeName>
    <alternativeName>
        <fullName>Transmembrane protein 63C</fullName>
    </alternativeName>
</protein>
<accession>D3ZNF5</accession>
<sequence length="802" mass="92962">MTASPESMGQKFRNMTANECFQSRSTVLQGQPFGGIPTVLLLNIILWVCVVLVYSFLRKAAWDYGRLALLIHNDSLTSLIYGEQSEKSSPSEVYLEAERRDKGFSTWFFNSLTMRDRDLINKCGEDARIYIMFQYHLIIFVLILCIPSLGIILPVNYIGSALDWSSHFGRTTIVNVSTESQFLWLHSIFAFMYFLTNFAFMGHHCLGFVPKKNLHFTRTLMITYVPTEIQDPETISKHFHEAYPGCVVTRVHFCYDVRNLIDLDDQRRHAMRGRLYYTAKAKKTGKVMIKVHPCSHLCFCKCWTCFKEVDAEQYYSELEEQLTDEFNAELNRVQLKRLDLIFVTFQDARTVKRIHNDYKYINCGRHPMQSSVTTIVKNNHWRVARAPHPKDIIWKHLSIRRFSWWARFIAINTSLFFLFFFLTTPAIIINTIDMYNVTRPIEKLQSPVVTQFFPSVLLWAFTVIMPLLVYFSAFLEAHWTRSNQNLIIMYKCYIFLVFMVVILPSMGLTSLDVFLRWLFDIYYLEHATIRFQCVFLPDNGAFFINYVITSALFGTGMELMRLGSLCTYCTRLFLSRSEPERVHIRKNLAMDFQFGREYAWMLNVFSVVMAYSITCPIIVPFGLLYLCMKHITDRYNMYYSYAPTKLNAQIHMAAVYQAIFAPLLGLFWMLFFSILRVGSLHSITLFSLSSIIISVIIAFSGVFLGKFRIAQQYEQPEEETETVFDVEPSSTTSTPTSLLYVATVLQEPELNLTPASSPARHTYGTMNSQPEEGEEESGLRGFARELDPAQFQEGLELEGQSH</sequence>
<evidence type="ECO:0000250" key="1">
    <source>
        <dbReference type="UniProtKB" id="Q8CBX0"/>
    </source>
</evidence>
<evidence type="ECO:0000250" key="2">
    <source>
        <dbReference type="UniProtKB" id="Q9P1W3"/>
    </source>
</evidence>
<evidence type="ECO:0000255" key="3"/>
<evidence type="ECO:0000256" key="4">
    <source>
        <dbReference type="SAM" id="MobiDB-lite"/>
    </source>
</evidence>
<evidence type="ECO:0000269" key="5">
    <source>
    </source>
</evidence>
<evidence type="ECO:0000305" key="6"/>